<proteinExistence type="inferred from homology"/>
<name>PXCA_TRIV2</name>
<protein>
    <recommendedName>
        <fullName evidence="1">Proton extrusion protein PxcA</fullName>
    </recommendedName>
</protein>
<dbReference type="EMBL" id="CP000117">
    <property type="protein sequence ID" value="ABA20806.1"/>
    <property type="molecule type" value="Genomic_DNA"/>
</dbReference>
<dbReference type="SMR" id="Q3MDY0"/>
<dbReference type="STRING" id="240292.Ava_1182"/>
<dbReference type="KEGG" id="ava:Ava_1182"/>
<dbReference type="eggNOG" id="ENOG502Z8DN">
    <property type="taxonomic scope" value="Bacteria"/>
</dbReference>
<dbReference type="HOGENOM" id="CLU_690401_0_0_3"/>
<dbReference type="Proteomes" id="UP000002533">
    <property type="component" value="Chromosome"/>
</dbReference>
<dbReference type="GO" id="GO:0005886">
    <property type="term" value="C:plasma membrane"/>
    <property type="evidence" value="ECO:0007669"/>
    <property type="project" value="UniProtKB-SubCell"/>
</dbReference>
<dbReference type="GO" id="GO:0015078">
    <property type="term" value="F:proton transmembrane transporter activity"/>
    <property type="evidence" value="ECO:0007669"/>
    <property type="project" value="UniProtKB-UniRule"/>
</dbReference>
<dbReference type="HAMAP" id="MF_01308">
    <property type="entry name" value="CemA_PxcA"/>
    <property type="match status" value="1"/>
</dbReference>
<dbReference type="InterPro" id="IPR004282">
    <property type="entry name" value="CemA"/>
</dbReference>
<dbReference type="NCBIfam" id="NF002703">
    <property type="entry name" value="PRK02507.1-1"/>
    <property type="match status" value="1"/>
</dbReference>
<dbReference type="PANTHER" id="PTHR33650:SF2">
    <property type="entry name" value="CHLOROPLAST ENVELOPE MEMBRANE PROTEIN"/>
    <property type="match status" value="1"/>
</dbReference>
<dbReference type="PANTHER" id="PTHR33650">
    <property type="entry name" value="CHLOROPLAST ENVELOPE MEMBRANE PROTEIN-RELATED"/>
    <property type="match status" value="1"/>
</dbReference>
<dbReference type="Pfam" id="PF03040">
    <property type="entry name" value="CemA"/>
    <property type="match status" value="1"/>
</dbReference>
<evidence type="ECO:0000255" key="1">
    <source>
        <dbReference type="HAMAP-Rule" id="MF_01308"/>
    </source>
</evidence>
<evidence type="ECO:0000256" key="2">
    <source>
        <dbReference type="SAM" id="MobiDB-lite"/>
    </source>
</evidence>
<feature type="chain" id="PRO_0000293495" description="Proton extrusion protein PxcA">
    <location>
        <begin position="1"/>
        <end position="467"/>
    </location>
</feature>
<feature type="transmembrane region" description="Helical" evidence="1">
    <location>
        <begin position="249"/>
        <end position="269"/>
    </location>
</feature>
<feature type="transmembrane region" description="Helical" evidence="1">
    <location>
        <begin position="352"/>
        <end position="372"/>
    </location>
</feature>
<feature type="transmembrane region" description="Helical" evidence="1">
    <location>
        <begin position="391"/>
        <end position="411"/>
    </location>
</feature>
<feature type="transmembrane region" description="Helical" evidence="1">
    <location>
        <begin position="427"/>
        <end position="447"/>
    </location>
</feature>
<feature type="region of interest" description="Disordered" evidence="2">
    <location>
        <begin position="183"/>
        <end position="205"/>
    </location>
</feature>
<feature type="compositionally biased region" description="Basic and acidic residues" evidence="2">
    <location>
        <begin position="191"/>
        <end position="203"/>
    </location>
</feature>
<comment type="function">
    <text evidence="1">Required for H(+) efflux immediately after light irradiation to form a rapid H(+) concentration gradient across the thylakoid membranes. Together with PxcL, contributes to transient H(+) uptake following dark to light transition.</text>
</comment>
<comment type="subcellular location">
    <subcellularLocation>
        <location evidence="1">Cell inner membrane</location>
        <topology evidence="1">Multi-pass membrane protein</topology>
    </subcellularLocation>
</comment>
<comment type="similarity">
    <text evidence="1">Belongs to the CemA family.</text>
</comment>
<gene>
    <name evidence="1" type="primary">pxcA</name>
    <name type="synonym">cemA</name>
    <name type="ordered locus">Ava_1182</name>
</gene>
<keyword id="KW-0997">Cell inner membrane</keyword>
<keyword id="KW-1003">Cell membrane</keyword>
<keyword id="KW-0375">Hydrogen ion transport</keyword>
<keyword id="KW-0406">Ion transport</keyword>
<keyword id="KW-0472">Membrane</keyword>
<keyword id="KW-0812">Transmembrane</keyword>
<keyword id="KW-1133">Transmembrane helix</keyword>
<keyword id="KW-0813">Transport</keyword>
<sequence length="467" mass="53634">MPTMRNSIFSEKVYPILLSAYRWYLRTPERSLEEAYKAALNIKAIEDEHFNGNKIDFNSAIYSNSVMDYFESDLAQELKTARMRLTEFRFSRWFSNESHQKAARKAGIEYPSSTVILEKLKFIDEIISKYIITDYEIAAPSGASDLQVRTTSLQPPENPSLTDSLRNNDINKNNLVERIYTPTSPPQLIRPRTEQNKKPRGKADTTGILPRSILSTIGRLQIELDPNSEQDVINNFRQAQKRSIISIRFILLLIIVPLLTHQLSKALIVSPIFNHFKKADTEQIFLNSEMEEEALSTLHRFEERIKFENLISNAPPLSAEAIETQIKEKAEEIAAEFRGESANAIKNVFADIFSVGAFIWLLLVSKPSIMVLKEFFDNVVYGLSDSAKAFIIILFTDVFVGFHSPHGWEVILEGLSRHWGLPANRDFIFLFIATFPVILDTIFKYWIFRYLNRISPSAVATYRNMNE</sequence>
<reference key="1">
    <citation type="journal article" date="2014" name="Stand. Genomic Sci.">
        <title>Complete genome sequence of Anabaena variabilis ATCC 29413.</title>
        <authorList>
            <person name="Thiel T."/>
            <person name="Pratte B.S."/>
            <person name="Zhong J."/>
            <person name="Goodwin L."/>
            <person name="Copeland A."/>
            <person name="Lucas S."/>
            <person name="Han C."/>
            <person name="Pitluck S."/>
            <person name="Land M.L."/>
            <person name="Kyrpides N.C."/>
            <person name="Woyke T."/>
        </authorList>
    </citation>
    <scope>NUCLEOTIDE SEQUENCE [LARGE SCALE GENOMIC DNA]</scope>
    <source>
        <strain>ATCC 29413 / PCC 7937</strain>
    </source>
</reference>
<organism>
    <name type="scientific">Trichormus variabilis (strain ATCC 29413 / PCC 7937)</name>
    <name type="common">Anabaena variabilis</name>
    <dbReference type="NCBI Taxonomy" id="240292"/>
    <lineage>
        <taxon>Bacteria</taxon>
        <taxon>Bacillati</taxon>
        <taxon>Cyanobacteriota</taxon>
        <taxon>Cyanophyceae</taxon>
        <taxon>Nostocales</taxon>
        <taxon>Nostocaceae</taxon>
        <taxon>Trichormus</taxon>
    </lineage>
</organism>
<accession>Q3MDY0</accession>